<reference key="1">
    <citation type="journal article" date="1991" name="J. Virol.">
        <title>A highly divergent simian immunodeficiency virus (SIVstm) recovered from stored stump-tailed macaque tissues.</title>
        <authorList>
            <person name="Khan A.S."/>
            <person name="Galvin T.A."/>
            <person name="Lowenstine L.J."/>
            <person name="Jennings M.B."/>
            <person name="Gardner M.B."/>
            <person name="Buckler C.E."/>
        </authorList>
    </citation>
    <scope>NUCLEOTIDE SEQUENCE [GENOMIC DNA]</scope>
</reference>
<accession>P31634</accession>
<evidence type="ECO:0000250" key="1"/>
<evidence type="ECO:0000250" key="2">
    <source>
        <dbReference type="UniProtKB" id="P04591"/>
    </source>
</evidence>
<evidence type="ECO:0000250" key="3">
    <source>
        <dbReference type="UniProtKB" id="P05893"/>
    </source>
</evidence>
<evidence type="ECO:0000250" key="4">
    <source>
        <dbReference type="UniProtKB" id="P12493"/>
    </source>
</evidence>
<evidence type="ECO:0000255" key="5">
    <source>
        <dbReference type="PROSITE-ProRule" id="PRU00047"/>
    </source>
</evidence>
<evidence type="ECO:0000256" key="6">
    <source>
        <dbReference type="SAM" id="MobiDB-lite"/>
    </source>
</evidence>
<evidence type="ECO:0000305" key="7"/>
<comment type="function">
    <text evidence="1">Matrix protein p17 targets Gag and Gag-Pol polyproteins to the plasma membrane via a multipartite membrane binding signal, that includes its myristoylated N-terminus. Also mediates nuclear localization of the preintegration complex. Implicated in the release from host cell mediated by Vpu (By similarity).</text>
</comment>
<comment type="function">
    <text evidence="1">Capsid protein p24 forms the conical core of the virus that encapsulates the genomic RNA-nucleocapsid complex.</text>
</comment>
<comment type="function">
    <text evidence="1">Nucleocapsid protein p7 encapsulates and protects viral dimeric unspliced (genomic) RNA. Binds these RNAs through its zinc fingers (By similarity).</text>
</comment>
<comment type="function">
    <text evidence="1">p6-gag plays a role in budding of the assembled particle by interacting with the host class E VPS proteins TSG101 and PDCD6IP/AIP1.</text>
</comment>
<comment type="subunit">
    <molecule>Matrix protein p17</molecule>
    <text evidence="2 4">Homotrimer. Interacts with gp41 (via C-terminus).</text>
</comment>
<comment type="subunit">
    <molecule>p6-gag</molecule>
    <text evidence="4">Interacts with host TSG101 (By similarity).</text>
</comment>
<comment type="subcellular location">
    <molecule>Matrix protein p17</molecule>
    <subcellularLocation>
        <location evidence="7">Virion</location>
    </subcellularLocation>
    <subcellularLocation>
        <location evidence="1">Host nucleus</location>
    </subcellularLocation>
    <subcellularLocation>
        <location evidence="1">Host cytoplasm</location>
    </subcellularLocation>
    <subcellularLocation>
        <location evidence="7">Host cell membrane</location>
        <topology evidence="7">Lipid-anchor</topology>
    </subcellularLocation>
    <text evidence="1">Following virus entry, the nuclear localization signal (NLS) of the matrix protein participates with Vpr to the nuclear localization of the viral genome. During virus production, the nuclear export activity of the matrix protein counteracts the NLS to maintain the Gag and Gag-Pol polyproteins in the cytoplasm, thereby directing unspliced RNA to the plasma membrane (By similarity).</text>
</comment>
<comment type="subcellular location">
    <molecule>Capsid protein p24</molecule>
    <subcellularLocation>
        <location evidence="7">Virion</location>
    </subcellularLocation>
</comment>
<comment type="subcellular location">
    <molecule>Nucleocapsid protein p7</molecule>
    <subcellularLocation>
        <location evidence="7">Virion</location>
    </subcellularLocation>
</comment>
<comment type="alternative products">
    <event type="ribosomal frameshifting"/>
    <isoform>
        <id>P31634-1</id>
        <name>Gag polyprotein</name>
        <sequence type="displayed"/>
    </isoform>
    <isoform>
        <id>P31634-2</id>
        <name>Gag-Pol polyprotein</name>
        <sequence type="not described"/>
    </isoform>
    <text>Translation results in the formation of the Gag polyprotein most of the time. Ribosomal frameshifting at the gag-pol genes boundary occurs at low frequency and produces the Gag-Pol polyprotein. This strategy of translation probably allows the virus to modulate the quantity of each viral protein. Maintenance of a correct Gag to Gag-Pol ratio is essential for RNA dimerization and viral infectivity.</text>
</comment>
<comment type="domain">
    <text evidence="3">Late-budding domains (L domains) are short sequence motifs essential for viral particle budding. They recruit proteins of the host ESCRT machinery (Endosomal Sorting Complex Required for Transport) or ESCRT-associated proteins. p6-gag contains two L domains: a PTAP/PSAP motif, which interacts with the UEV domain of TSG101 and an ALIX binding motif.</text>
</comment>
<comment type="PTM">
    <text evidence="1">Capsid protein p24 is phosphorylated.</text>
</comment>
<comment type="PTM">
    <text evidence="1">Specific enzymatic cleavages by the viral protease yield mature proteins. The polyprotein is cleaved during and after budding, this process is termed maturation (By similarity).</text>
</comment>
<comment type="miscellaneous">
    <text>This is a macaque isolate.</text>
</comment>
<comment type="miscellaneous">
    <molecule>Isoform Gag polyprotein</molecule>
    <text>Produced by conventional translation.</text>
</comment>
<comment type="miscellaneous">
    <molecule>Isoform Gag-Pol polyprotein</molecule>
    <text evidence="7">Produced by -1 ribosomal frameshifting.</text>
</comment>
<comment type="similarity">
    <text evidence="7">Belongs to the primate lentivirus group gag polyprotein family.</text>
</comment>
<sequence length="510" mass="56523">MGARSSVLSGKKADELEKVRLRPGGKKKYMLKHVVWAANELDRFGLAESLLESKEGCQKILTVLEPLVPTGSENLKSLFNTVCVIWCIHAEEKVKHTEEAKQVVKRHLVVETGTADKMPATSRPTAPPSGRGGNYPVQQVGGNYVHLPLSPRTLNAWVKLVEEKKFGAEVVSGFQALSEGCTPYDINQMLNCVGEHQAAMQIIREIINEEAADWDVQHPQPGPLPAGQLREPSGSDIAGTTSTVEEQIQWMHRQQNPIPVGNIYRRWIQLGLQKCVRMYNPVNILDIKQGPKEPFQSYVDRFYKSLRAEQADPAVKNWMTQTPLIQNANPDCKLVLKGLGMNPTLEEMLTACQGVGGPGQKARLMAEALKEAFQPGPLPFAAAQQQGRRTVKCWNCGKEGHTAKQCKAPRRQGCWKCGKPGHQMAKCPERQVGFLGFGPWGKKPRNFPMAQIPQGLTPTAPPEMPTAPPVDPAADLLRSYMQLGKKQRESRKTPYKEVTEDLVHLNSLFG</sequence>
<protein>
    <recommendedName>
        <fullName>Gag polyprotein</fullName>
    </recommendedName>
    <alternativeName>
        <fullName>Pr55Gag</fullName>
    </alternativeName>
    <component>
        <recommendedName>
            <fullName>Matrix protein p17</fullName>
            <shortName>MA</shortName>
        </recommendedName>
    </component>
    <component>
        <recommendedName>
            <fullName>Capsid protein p24</fullName>
            <shortName>CA</shortName>
        </recommendedName>
    </component>
    <component>
        <recommendedName>
            <fullName>Spacer peptide p2</fullName>
        </recommendedName>
    </component>
    <component>
        <recommendedName>
            <fullName>Nucleocapsid protein p7</fullName>
            <shortName>NC</shortName>
        </recommendedName>
    </component>
    <component>
        <recommendedName>
            <fullName>Spacer peptide p1</fullName>
        </recommendedName>
    </component>
    <component>
        <recommendedName>
            <fullName>p6-gag</fullName>
        </recommendedName>
    </component>
</protein>
<organism>
    <name type="scientific">Simian immunodeficiency virus (isolate STM)</name>
    <name type="common">SIV-mac</name>
    <name type="synonym">Simian immunodeficiency virus rhesus monkey</name>
    <dbReference type="NCBI Taxonomy" id="31683"/>
    <lineage>
        <taxon>Viruses</taxon>
        <taxon>Riboviria</taxon>
        <taxon>Pararnavirae</taxon>
        <taxon>Artverviricota</taxon>
        <taxon>Revtraviricetes</taxon>
        <taxon>Ortervirales</taxon>
        <taxon>Retroviridae</taxon>
        <taxon>Orthoretrovirinae</taxon>
        <taxon>Lentivirus</taxon>
        <taxon>Simian immunodeficiency virus</taxon>
    </lineage>
</organism>
<proteinExistence type="inferred from homology"/>
<keyword id="KW-0167">Capsid protein</keyword>
<keyword id="KW-1032">Host cell membrane</keyword>
<keyword id="KW-1035">Host cytoplasm</keyword>
<keyword id="KW-1043">Host membrane</keyword>
<keyword id="KW-1048">Host nucleus</keyword>
<keyword id="KW-0945">Host-virus interaction</keyword>
<keyword id="KW-0449">Lipoprotein</keyword>
<keyword id="KW-0472">Membrane</keyword>
<keyword id="KW-0479">Metal-binding</keyword>
<keyword id="KW-0519">Myristate</keyword>
<keyword id="KW-0597">Phosphoprotein</keyword>
<keyword id="KW-0677">Repeat</keyword>
<keyword id="KW-0688">Ribosomal frameshifting</keyword>
<keyword id="KW-0694">RNA-binding</keyword>
<keyword id="KW-1198">Viral budding</keyword>
<keyword id="KW-1187">Viral budding via the host ESCRT complexes</keyword>
<keyword id="KW-0543">Viral nucleoprotein</keyword>
<keyword id="KW-1188">Viral release from host cell</keyword>
<keyword id="KW-0946">Virion</keyword>
<keyword id="KW-0862">Zinc</keyword>
<keyword id="KW-0863">Zinc-finger</keyword>
<name>GAG_SIVMS</name>
<feature type="initiator methionine" description="Removed; by host" evidence="1">
    <location>
        <position position="1"/>
    </location>
</feature>
<feature type="chain" id="PRO_0000316135" description="Gag polyprotein" evidence="1">
    <location>
        <begin position="2"/>
        <end position="510"/>
    </location>
</feature>
<feature type="chain" id="PRO_0000038638" description="Matrix protein p17" evidence="1">
    <location>
        <begin position="2"/>
        <end position="135"/>
    </location>
</feature>
<feature type="chain" id="PRO_0000038639" description="Capsid protein p24" evidence="1">
    <location>
        <begin position="136"/>
        <end position="365"/>
    </location>
</feature>
<feature type="peptide" id="PRO_0000316136" description="Spacer peptide p2" evidence="1">
    <location>
        <begin position="366"/>
        <end position="380"/>
    </location>
</feature>
<feature type="chain" id="PRO_0000316137" description="Nucleocapsid protein p7" evidence="1">
    <location>
        <begin position="381"/>
        <end position="433"/>
    </location>
</feature>
<feature type="peptide" id="PRO_0000316138" description="Spacer peptide p1" evidence="1">
    <location>
        <begin position="434"/>
        <end position="447"/>
    </location>
</feature>
<feature type="chain" id="PRO_0000316139" description="p6-gag" evidence="1">
    <location>
        <begin position="448"/>
        <end position="510"/>
    </location>
</feature>
<feature type="zinc finger region" description="CCHC-type 1" evidence="5">
    <location>
        <begin position="391"/>
        <end position="408"/>
    </location>
</feature>
<feature type="zinc finger region" description="CCHC-type 2" evidence="5">
    <location>
        <begin position="412"/>
        <end position="429"/>
    </location>
</feature>
<feature type="region of interest" description="Disordered" evidence="6">
    <location>
        <begin position="219"/>
        <end position="238"/>
    </location>
</feature>
<feature type="region of interest" description="Interaction with host ALIX" evidence="3">
    <location>
        <begin position="492"/>
        <end position="505"/>
    </location>
</feature>
<feature type="short sequence motif" description="Nuclear export signal" evidence="1">
    <location>
        <begin position="16"/>
        <end position="22"/>
    </location>
</feature>
<feature type="short sequence motif" description="Nuclear localization signal" evidence="1">
    <location>
        <begin position="26"/>
        <end position="32"/>
    </location>
</feature>
<feature type="short sequence motif" description="PTAP/PSAP motif" evidence="3">
    <location>
        <begin position="458"/>
        <end position="461"/>
    </location>
</feature>
<feature type="site" description="Cleavage; by viral protease" evidence="1">
    <location>
        <begin position="135"/>
        <end position="136"/>
    </location>
</feature>
<feature type="site" description="Cleavage; by viral protease" evidence="1">
    <location>
        <begin position="447"/>
        <end position="448"/>
    </location>
</feature>
<feature type="lipid moiety-binding region" description="N-myristoyl glycine; by host" evidence="1">
    <location>
        <position position="2"/>
    </location>
</feature>
<gene>
    <name type="primary">gag</name>
</gene>
<dbReference type="EMBL" id="X60667">
    <property type="protein sequence ID" value="CAA43084.1"/>
    <property type="molecule type" value="Genomic_DNA"/>
</dbReference>
<dbReference type="PIR" id="A41565">
    <property type="entry name" value="FOLJTM"/>
</dbReference>
<dbReference type="SMR" id="P31634"/>
<dbReference type="GO" id="GO:0030430">
    <property type="term" value="C:host cell cytoplasm"/>
    <property type="evidence" value="ECO:0007669"/>
    <property type="project" value="UniProtKB-SubCell"/>
</dbReference>
<dbReference type="GO" id="GO:0042025">
    <property type="term" value="C:host cell nucleus"/>
    <property type="evidence" value="ECO:0007669"/>
    <property type="project" value="UniProtKB-SubCell"/>
</dbReference>
<dbReference type="GO" id="GO:0020002">
    <property type="term" value="C:host cell plasma membrane"/>
    <property type="evidence" value="ECO:0007669"/>
    <property type="project" value="UniProtKB-SubCell"/>
</dbReference>
<dbReference type="GO" id="GO:0016020">
    <property type="term" value="C:membrane"/>
    <property type="evidence" value="ECO:0007669"/>
    <property type="project" value="UniProtKB-KW"/>
</dbReference>
<dbReference type="GO" id="GO:0019013">
    <property type="term" value="C:viral nucleocapsid"/>
    <property type="evidence" value="ECO:0007669"/>
    <property type="project" value="UniProtKB-KW"/>
</dbReference>
<dbReference type="GO" id="GO:0003723">
    <property type="term" value="F:RNA binding"/>
    <property type="evidence" value="ECO:0007669"/>
    <property type="project" value="UniProtKB-KW"/>
</dbReference>
<dbReference type="GO" id="GO:0005198">
    <property type="term" value="F:structural molecule activity"/>
    <property type="evidence" value="ECO:0007669"/>
    <property type="project" value="InterPro"/>
</dbReference>
<dbReference type="GO" id="GO:0008270">
    <property type="term" value="F:zinc ion binding"/>
    <property type="evidence" value="ECO:0007669"/>
    <property type="project" value="UniProtKB-KW"/>
</dbReference>
<dbReference type="GO" id="GO:0039702">
    <property type="term" value="P:viral budding via host ESCRT complex"/>
    <property type="evidence" value="ECO:0007669"/>
    <property type="project" value="UniProtKB-KW"/>
</dbReference>
<dbReference type="GO" id="GO:0075523">
    <property type="term" value="P:viral translational frameshifting"/>
    <property type="evidence" value="ECO:0007669"/>
    <property type="project" value="UniProtKB-KW"/>
</dbReference>
<dbReference type="Gene3D" id="1.10.1200.30">
    <property type="match status" value="1"/>
</dbReference>
<dbReference type="Gene3D" id="1.10.375.10">
    <property type="entry name" value="Human Immunodeficiency Virus Type 1 Capsid Protein"/>
    <property type="match status" value="1"/>
</dbReference>
<dbReference type="Gene3D" id="1.10.150.90">
    <property type="entry name" value="Immunodeficiency lentiviruses, gag gene matrix protein p17"/>
    <property type="match status" value="1"/>
</dbReference>
<dbReference type="Gene3D" id="1.20.5.760">
    <property type="entry name" value="Single helix bin"/>
    <property type="match status" value="1"/>
</dbReference>
<dbReference type="Gene3D" id="4.10.60.10">
    <property type="entry name" value="Zinc finger, CCHC-type"/>
    <property type="match status" value="1"/>
</dbReference>
<dbReference type="InterPro" id="IPR045345">
    <property type="entry name" value="Gag_p24_C"/>
</dbReference>
<dbReference type="InterPro" id="IPR000071">
    <property type="entry name" value="Lentvrl_matrix_N"/>
</dbReference>
<dbReference type="InterPro" id="IPR012344">
    <property type="entry name" value="Matrix_HIV/RSV_N"/>
</dbReference>
<dbReference type="InterPro" id="IPR050195">
    <property type="entry name" value="Primate_lentivir_Gag_pol-like"/>
</dbReference>
<dbReference type="InterPro" id="IPR008916">
    <property type="entry name" value="Retrov_capsid_C"/>
</dbReference>
<dbReference type="InterPro" id="IPR008919">
    <property type="entry name" value="Retrov_capsid_N"/>
</dbReference>
<dbReference type="InterPro" id="IPR010999">
    <property type="entry name" value="Retrovr_matrix"/>
</dbReference>
<dbReference type="InterPro" id="IPR001878">
    <property type="entry name" value="Znf_CCHC"/>
</dbReference>
<dbReference type="InterPro" id="IPR036875">
    <property type="entry name" value="Znf_CCHC_sf"/>
</dbReference>
<dbReference type="PANTHER" id="PTHR40389">
    <property type="entry name" value="ENDOGENOUS RETROVIRUS GROUP K MEMBER 24 GAG POLYPROTEIN-RELATED"/>
    <property type="match status" value="1"/>
</dbReference>
<dbReference type="PANTHER" id="PTHR40389:SF3">
    <property type="entry name" value="IGE-BINDING PROTEIN"/>
    <property type="match status" value="1"/>
</dbReference>
<dbReference type="Pfam" id="PF00540">
    <property type="entry name" value="Gag_p17"/>
    <property type="match status" value="1"/>
</dbReference>
<dbReference type="Pfam" id="PF00607">
    <property type="entry name" value="Gag_p24"/>
    <property type="match status" value="1"/>
</dbReference>
<dbReference type="Pfam" id="PF19317">
    <property type="entry name" value="Gag_p24_C"/>
    <property type="match status" value="1"/>
</dbReference>
<dbReference type="Pfam" id="PF00098">
    <property type="entry name" value="zf-CCHC"/>
    <property type="match status" value="2"/>
</dbReference>
<dbReference type="PRINTS" id="PR00234">
    <property type="entry name" value="HIV1MATRIX"/>
</dbReference>
<dbReference type="SMART" id="SM00343">
    <property type="entry name" value="ZnF_C2HC"/>
    <property type="match status" value="2"/>
</dbReference>
<dbReference type="SUPFAM" id="SSF47836">
    <property type="entry name" value="Retroviral matrix proteins"/>
    <property type="match status" value="1"/>
</dbReference>
<dbReference type="SUPFAM" id="SSF47353">
    <property type="entry name" value="Retrovirus capsid dimerization domain-like"/>
    <property type="match status" value="1"/>
</dbReference>
<dbReference type="SUPFAM" id="SSF47943">
    <property type="entry name" value="Retrovirus capsid protein, N-terminal core domain"/>
    <property type="match status" value="1"/>
</dbReference>
<dbReference type="SUPFAM" id="SSF57756">
    <property type="entry name" value="Retrovirus zinc finger-like domains"/>
    <property type="match status" value="1"/>
</dbReference>
<dbReference type="PROSITE" id="PS50158">
    <property type="entry name" value="ZF_CCHC"/>
    <property type="match status" value="2"/>
</dbReference>
<organismHost>
    <name type="scientific">Cercopithecidae</name>
    <name type="common">Old World monkeys</name>
    <dbReference type="NCBI Taxonomy" id="9527"/>
</organismHost>